<sequence length="167" mass="19843">MNQSYFNLLGNITWLWMNSSLHKEWSCELLARNVIPAIENEQYMLLIDNGIPIAYCSWADLNLETEVKYIKDINSLTPEEWQSGDRRWIIDWVAPFGHSQLLYKKMCQKYPDMIVRSIRFYPKQKELGKIAYFKGGKLDKKTAKKRFDTYQEELATALKNEFNFIKK</sequence>
<organism>
    <name type="scientific">Mannheimia haemolytica</name>
    <name type="common">Pasteurella haemolytica</name>
    <dbReference type="NCBI Taxonomy" id="75985"/>
    <lineage>
        <taxon>Bacteria</taxon>
        <taxon>Pseudomonadati</taxon>
        <taxon>Pseudomonadota</taxon>
        <taxon>Gammaproteobacteria</taxon>
        <taxon>Pasteurellales</taxon>
        <taxon>Pasteurellaceae</taxon>
        <taxon>Mannheimia</taxon>
    </lineage>
</organism>
<comment type="function">
    <text evidence="1">Involved in fatty acylation of the protoxin (LktA) at two internal lysine residues, thereby converting it to the active toxin.</text>
</comment>
<comment type="catalytic activity">
    <reaction evidence="2">
        <text>a fatty acyl-[ACP] + L-lysyl-[protein] = N(6)-(fatty acyl)-L-lysyl-[protein] + holo-[ACP] + H(+)</text>
        <dbReference type="Rhea" id="RHEA:70667"/>
        <dbReference type="Rhea" id="RHEA-COMP:9685"/>
        <dbReference type="Rhea" id="RHEA-COMP:9752"/>
        <dbReference type="Rhea" id="RHEA-COMP:14125"/>
        <dbReference type="Rhea" id="RHEA-COMP:17946"/>
        <dbReference type="ChEBI" id="CHEBI:15378"/>
        <dbReference type="ChEBI" id="CHEBI:29969"/>
        <dbReference type="ChEBI" id="CHEBI:64479"/>
        <dbReference type="ChEBI" id="CHEBI:138651"/>
        <dbReference type="ChEBI" id="CHEBI:189854"/>
    </reaction>
    <physiologicalReaction direction="left-to-right" evidence="2">
        <dbReference type="Rhea" id="RHEA:70668"/>
    </physiologicalReaction>
</comment>
<comment type="subcellular location">
    <subcellularLocation>
        <location evidence="3">Cytoplasm</location>
    </subcellularLocation>
</comment>
<comment type="similarity">
    <text evidence="3">Belongs to the RTX toxin acyltransferase family.</text>
</comment>
<keyword id="KW-0012">Acyltransferase</keyword>
<keyword id="KW-0204">Cytolysis</keyword>
<keyword id="KW-0963">Cytoplasm</keyword>
<keyword id="KW-0354">Hemolysis</keyword>
<keyword id="KW-0808">Transferase</keyword>
<reference key="1">
    <citation type="journal article" date="1987" name="Infect. Immun.">
        <title>Nucleotide sequence of the leukotoxin genes of Pasteurella haemolytica A1.</title>
        <authorList>
            <person name="Lo R.Y.C."/>
            <person name="Strathdee C.A."/>
            <person name="Shewen P.E."/>
        </authorList>
    </citation>
    <scope>NUCLEOTIDE SEQUENCE [GENOMIC DNA]</scope>
    <source>
        <strain>Serotype A1</strain>
    </source>
</reference>
<reference key="2">
    <citation type="journal article" date="1989" name="DNA">
        <title>DNA sequence of the Pasteurella haemolytica leukotoxin gene cluster.</title>
        <authorList>
            <person name="Highlander S.K."/>
            <person name="Chidambaram M."/>
            <person name="Engler M.J."/>
            <person name="Weinstock G.M."/>
        </authorList>
    </citation>
    <scope>NUCLEOTIDE SEQUENCE [GENOMIC DNA]</scope>
    <source>
        <strain>Serotype A1 / PH101</strain>
    </source>
</reference>
<reference key="3">
    <citation type="journal article" date="1993" name="Infect. Immun.">
        <title>Expression of the Pasteurella haemolytica leukotoxin is inhibited by a locus that encodes an ATP-binding cassette homolog.</title>
        <authorList>
            <person name="Highlander S.K."/>
            <person name="Wickersham E.A."/>
            <person name="Garza O."/>
            <person name="Weinstock G.M."/>
        </authorList>
    </citation>
    <scope>NUCLEOTIDE SEQUENCE [GENOMIC DNA] OF 1-115</scope>
    <source>
        <strain>Serotype A1 / PH101</strain>
    </source>
</reference>
<reference key="4">
    <citation type="journal article" date="1993" name="Infect. Immun.">
        <authorList>
            <person name="Highlander S.K."/>
            <person name="Wickersham E.A."/>
            <person name="Garza O."/>
            <person name="Weinstock G.M."/>
        </authorList>
    </citation>
    <scope>ERRATUM OF PUBMED:8359916</scope>
</reference>
<reference key="5">
    <citation type="journal article" date="1990" name="J. Bacteriol.">
        <title>Secretion and expression of the Pasteurella haemolytica Leukotoxin.</title>
        <authorList>
            <person name="Highlander S.K."/>
            <person name="Engler M.J."/>
            <person name="Weinstock G.M."/>
        </authorList>
    </citation>
    <scope>NUCLEOTIDE SEQUENCE [GENOMIC DNA] OF 1-20</scope>
    <source>
        <strain>Serotype A1 / PH101</strain>
    </source>
</reference>
<accession>P16533</accession>
<evidence type="ECO:0000250" key="1">
    <source>
        <dbReference type="UniProtKB" id="P16461"/>
    </source>
</evidence>
<evidence type="ECO:0000250" key="2">
    <source>
        <dbReference type="UniProtKB" id="P55132"/>
    </source>
</evidence>
<evidence type="ECO:0000305" key="3"/>
<name>LKTC1_MANHA</name>
<gene>
    <name type="primary">lktC</name>
</gene>
<proteinExistence type="inferred from homology"/>
<feature type="chain" id="PRO_0000217879" description="Leukotoxin-activating lysine-acyltransferase LktC serotype A1">
    <location>
        <begin position="1"/>
        <end position="167"/>
    </location>
</feature>
<feature type="active site" evidence="2">
    <location>
        <position position="22"/>
    </location>
</feature>
<feature type="active site" evidence="2">
    <location>
        <position position="91"/>
    </location>
</feature>
<feature type="sequence conflict" description="In Ref. 2; AAA25542." evidence="3" ref="2">
    <original>A</original>
    <variation>R</variation>
    <location>
        <position position="157"/>
    </location>
</feature>
<dbReference type="EC" id="2.3.1.-" evidence="2"/>
<dbReference type="EMBL" id="M20730">
    <property type="protein sequence ID" value="AAA25528.1"/>
    <property type="molecule type" value="Genomic_DNA"/>
</dbReference>
<dbReference type="EMBL" id="M24197">
    <property type="protein sequence ID" value="AAA25542.1"/>
    <property type="molecule type" value="Genomic_DNA"/>
</dbReference>
<dbReference type="EMBL" id="M59210">
    <property type="protein sequence ID" value="AAA25537.1"/>
    <property type="molecule type" value="Genomic_DNA"/>
</dbReference>
<dbReference type="PIR" id="A30169">
    <property type="entry name" value="A30169"/>
</dbReference>
<dbReference type="PIR" id="S29515">
    <property type="entry name" value="S29515"/>
</dbReference>
<dbReference type="RefSeq" id="WP_006248022.1">
    <property type="nucleotide sequence ID" value="NZ_VAJK01000035.1"/>
</dbReference>
<dbReference type="SMR" id="P16533"/>
<dbReference type="STRING" id="75985.WC39_13365"/>
<dbReference type="OrthoDB" id="8596436at2"/>
<dbReference type="GO" id="GO:0005737">
    <property type="term" value="C:cytoplasm"/>
    <property type="evidence" value="ECO:0007669"/>
    <property type="project" value="UniProtKB-SubCell"/>
</dbReference>
<dbReference type="GO" id="GO:0016746">
    <property type="term" value="F:acyltransferase activity"/>
    <property type="evidence" value="ECO:0007669"/>
    <property type="project" value="UniProtKB-KW"/>
</dbReference>
<dbReference type="GO" id="GO:0031640">
    <property type="term" value="P:killing of cells of another organism"/>
    <property type="evidence" value="ECO:0007669"/>
    <property type="project" value="UniProtKB-KW"/>
</dbReference>
<dbReference type="GO" id="GO:0009404">
    <property type="term" value="P:toxin metabolic process"/>
    <property type="evidence" value="ECO:0007669"/>
    <property type="project" value="InterPro"/>
</dbReference>
<dbReference type="InterPro" id="IPR003996">
    <property type="entry name" value="RTX_toxin-activating_protC_bac"/>
</dbReference>
<dbReference type="Pfam" id="PF02794">
    <property type="entry name" value="HlyC"/>
    <property type="match status" value="1"/>
</dbReference>
<dbReference type="PRINTS" id="PR01489">
    <property type="entry name" value="RTXTOXINC"/>
</dbReference>
<protein>
    <recommendedName>
        <fullName>Leukotoxin-activating lysine-acyltransferase LktC serotype A1</fullName>
        <shortName>Leukotoxin C</shortName>
        <shortName>Toxin-activating protein C</shortName>
        <ecNumber evidence="2">2.3.1.-</ecNumber>
    </recommendedName>
</protein>